<protein>
    <recommendedName>
        <fullName evidence="2">Cryptide Pep-24</fullName>
    </recommendedName>
</protein>
<dbReference type="GO" id="GO:0005576">
    <property type="term" value="C:extracellular region"/>
    <property type="evidence" value="ECO:0007669"/>
    <property type="project" value="UniProtKB-SubCell"/>
</dbReference>
<name>CRY24_TITOB</name>
<reference key="1">
    <citation type="journal article" date="2018" name="J. Proteomics">
        <title>Profiling the short, linear, non-disulfide bond-containing peptidome from the venom of the scorpion Tityus obscurus.</title>
        <authorList>
            <person name="Dias N.B."/>
            <person name="de Souza B.M."/>
            <person name="Cocchi F.K."/>
            <person name="Chalkidis H.M."/>
            <person name="Dorce V.A.C."/>
            <person name="Palma M.S."/>
        </authorList>
    </citation>
    <scope>PROTEIN SEQUENCE</scope>
    <scope>IDENTIFICATION BY MASS SPECTROMETRY</scope>
    <scope>MASS SPECTROMETRY</scope>
    <scope>SUBCELLULAR LOCATION</scope>
    <source>
        <tissue>Venom</tissue>
    </source>
</reference>
<keyword id="KW-0903">Direct protein sequencing</keyword>
<keyword id="KW-0964">Secreted</keyword>
<proteinExistence type="evidence at protein level"/>
<accession>P0DRG9</accession>
<comment type="function">
    <text evidence="3">May act to induce hypotension.</text>
</comment>
<comment type="subcellular location">
    <subcellularLocation>
        <location evidence="1">Secreted</location>
    </subcellularLocation>
</comment>
<comment type="tissue specificity">
    <text evidence="3">Expressed by the venom gland.</text>
</comment>
<comment type="mass spectrometry" mass="525.29" method="Electrospray" evidence="1"/>
<evidence type="ECO:0000269" key="1">
    <source>
    </source>
</evidence>
<evidence type="ECO:0000303" key="2">
    <source>
    </source>
</evidence>
<evidence type="ECO:0000305" key="3">
    <source>
    </source>
</evidence>
<sequence length="5" mass="526">NAKPP</sequence>
<organism>
    <name type="scientific">Tityus obscurus</name>
    <name type="common">Amazonian scorpion</name>
    <name type="synonym">Tityus cambridgei</name>
    <dbReference type="NCBI Taxonomy" id="1221240"/>
    <lineage>
        <taxon>Eukaryota</taxon>
        <taxon>Metazoa</taxon>
        <taxon>Ecdysozoa</taxon>
        <taxon>Arthropoda</taxon>
        <taxon>Chelicerata</taxon>
        <taxon>Arachnida</taxon>
        <taxon>Scorpiones</taxon>
        <taxon>Buthida</taxon>
        <taxon>Buthoidea</taxon>
        <taxon>Buthidae</taxon>
        <taxon>Tityus</taxon>
    </lineage>
</organism>
<feature type="peptide" id="PRO_0000461759" description="Cryptide Pep-24" evidence="1">
    <location>
        <begin position="1"/>
        <end position="5"/>
    </location>
</feature>